<name>SPEA_ECOLI</name>
<proteinExistence type="evidence at protein level"/>
<dbReference type="EC" id="4.1.1.19" evidence="3 4 5"/>
<dbReference type="EMBL" id="M31770">
    <property type="protein sequence ID" value="AAA24646.1"/>
    <property type="molecule type" value="Genomic_DNA"/>
</dbReference>
<dbReference type="EMBL" id="U28377">
    <property type="protein sequence ID" value="AAA69105.1"/>
    <property type="molecule type" value="Genomic_DNA"/>
</dbReference>
<dbReference type="EMBL" id="U00096">
    <property type="protein sequence ID" value="AAC75975.1"/>
    <property type="molecule type" value="Genomic_DNA"/>
</dbReference>
<dbReference type="EMBL" id="AP009048">
    <property type="protein sequence ID" value="BAE77001.1"/>
    <property type="molecule type" value="Genomic_DNA"/>
</dbReference>
<dbReference type="EMBL" id="M32363">
    <property type="status" value="NOT_ANNOTATED_CDS"/>
    <property type="molecule type" value="Genomic_DNA"/>
</dbReference>
<dbReference type="PIR" id="A65079">
    <property type="entry name" value="A65079"/>
</dbReference>
<dbReference type="RefSeq" id="NP_417413.1">
    <property type="nucleotide sequence ID" value="NC_000913.3"/>
</dbReference>
<dbReference type="RefSeq" id="WP_001300904.1">
    <property type="nucleotide sequence ID" value="NZ_SSZK01000003.1"/>
</dbReference>
<dbReference type="PDB" id="3NZQ">
    <property type="method" value="X-ray"/>
    <property type="resolution" value="3.10 A"/>
    <property type="chains" value="A/B=1-658"/>
</dbReference>
<dbReference type="PDBsum" id="3NZQ"/>
<dbReference type="SMR" id="P21170"/>
<dbReference type="BioGRID" id="4262346">
    <property type="interactions" value="27"/>
</dbReference>
<dbReference type="BioGRID" id="851752">
    <property type="interactions" value="4"/>
</dbReference>
<dbReference type="DIP" id="DIP-10905N"/>
<dbReference type="FunCoup" id="P21170">
    <property type="interactions" value="185"/>
</dbReference>
<dbReference type="IntAct" id="P21170">
    <property type="interactions" value="16"/>
</dbReference>
<dbReference type="STRING" id="511145.b2938"/>
<dbReference type="jPOST" id="P21170"/>
<dbReference type="PaxDb" id="511145-b2938"/>
<dbReference type="DNASU" id="947432"/>
<dbReference type="EnsemblBacteria" id="AAC75975">
    <property type="protein sequence ID" value="AAC75975"/>
    <property type="gene ID" value="b2938"/>
</dbReference>
<dbReference type="GeneID" id="947432"/>
<dbReference type="KEGG" id="ecj:JW2905"/>
<dbReference type="KEGG" id="eco:b2938"/>
<dbReference type="KEGG" id="ecoc:C3026_16085"/>
<dbReference type="PATRIC" id="fig|1411691.4.peg.3795"/>
<dbReference type="EchoBASE" id="EB0952"/>
<dbReference type="eggNOG" id="COG1166">
    <property type="taxonomic scope" value="Bacteria"/>
</dbReference>
<dbReference type="HOGENOM" id="CLU_027243_1_0_6"/>
<dbReference type="InParanoid" id="P21170"/>
<dbReference type="OMA" id="AVEYTQH"/>
<dbReference type="OrthoDB" id="9802658at2"/>
<dbReference type="PhylomeDB" id="P21170"/>
<dbReference type="BioCyc" id="EcoCyc:ARGDECARBOXBIO-MONOMER"/>
<dbReference type="BioCyc" id="MetaCyc:ARGDECARBOXBIO-MONOMER"/>
<dbReference type="BRENDA" id="4.1.1.19">
    <property type="organism ID" value="2026"/>
</dbReference>
<dbReference type="SABIO-RK" id="P21170"/>
<dbReference type="UniPathway" id="UPA00186">
    <property type="reaction ID" value="UER00284"/>
</dbReference>
<dbReference type="EvolutionaryTrace" id="P21170"/>
<dbReference type="PRO" id="PR:P21170"/>
<dbReference type="Proteomes" id="UP000000625">
    <property type="component" value="Chromosome"/>
</dbReference>
<dbReference type="GO" id="GO:0042597">
    <property type="term" value="C:periplasmic space"/>
    <property type="evidence" value="ECO:0007669"/>
    <property type="project" value="UniProtKB-SubCell"/>
</dbReference>
<dbReference type="GO" id="GO:0008792">
    <property type="term" value="F:arginine decarboxylase activity"/>
    <property type="evidence" value="ECO:0000314"/>
    <property type="project" value="EcoCyc"/>
</dbReference>
<dbReference type="GO" id="GO:0042802">
    <property type="term" value="F:identical protein binding"/>
    <property type="evidence" value="ECO:0000314"/>
    <property type="project" value="EcoCyc"/>
</dbReference>
<dbReference type="GO" id="GO:0000287">
    <property type="term" value="F:magnesium ion binding"/>
    <property type="evidence" value="ECO:0000314"/>
    <property type="project" value="EcoCyc"/>
</dbReference>
<dbReference type="GO" id="GO:0030170">
    <property type="term" value="F:pyridoxal phosphate binding"/>
    <property type="evidence" value="ECO:0000314"/>
    <property type="project" value="EcoCyc"/>
</dbReference>
<dbReference type="GO" id="GO:0006527">
    <property type="term" value="P:arginine catabolic process"/>
    <property type="evidence" value="ECO:0000314"/>
    <property type="project" value="EcoCyc"/>
</dbReference>
<dbReference type="GO" id="GO:0051289">
    <property type="term" value="P:protein homotetramerization"/>
    <property type="evidence" value="ECO:0000314"/>
    <property type="project" value="EcoCyc"/>
</dbReference>
<dbReference type="GO" id="GO:0009446">
    <property type="term" value="P:putrescine biosynthetic process"/>
    <property type="evidence" value="ECO:0000314"/>
    <property type="project" value="EcoCyc"/>
</dbReference>
<dbReference type="GO" id="GO:0033388">
    <property type="term" value="P:putrescine biosynthetic process from arginine"/>
    <property type="evidence" value="ECO:0000315"/>
    <property type="project" value="EcoCyc"/>
</dbReference>
<dbReference type="GO" id="GO:0008295">
    <property type="term" value="P:spermidine biosynthetic process"/>
    <property type="evidence" value="ECO:0007669"/>
    <property type="project" value="UniProtKB-UniRule"/>
</dbReference>
<dbReference type="CDD" id="cd06830">
    <property type="entry name" value="PLPDE_III_ADC"/>
    <property type="match status" value="1"/>
</dbReference>
<dbReference type="FunFam" id="1.10.287.3440:FF:000001">
    <property type="entry name" value="Biosynthetic arginine decarboxylase"/>
    <property type="match status" value="1"/>
</dbReference>
<dbReference type="FunFam" id="1.20.58.930:FF:000001">
    <property type="entry name" value="Biosynthetic arginine decarboxylase"/>
    <property type="match status" value="1"/>
</dbReference>
<dbReference type="FunFam" id="2.40.37.10:FF:000001">
    <property type="entry name" value="Biosynthetic arginine decarboxylase"/>
    <property type="match status" value="1"/>
</dbReference>
<dbReference type="FunFam" id="3.20.20.10:FF:000001">
    <property type="entry name" value="Biosynthetic arginine decarboxylase"/>
    <property type="match status" value="1"/>
</dbReference>
<dbReference type="Gene3D" id="1.10.287.3440">
    <property type="match status" value="1"/>
</dbReference>
<dbReference type="Gene3D" id="1.20.58.930">
    <property type="match status" value="1"/>
</dbReference>
<dbReference type="Gene3D" id="3.20.20.10">
    <property type="entry name" value="Alanine racemase"/>
    <property type="match status" value="1"/>
</dbReference>
<dbReference type="Gene3D" id="2.40.37.10">
    <property type="entry name" value="Lyase, Ornithine Decarboxylase, Chain A, domain 1"/>
    <property type="match status" value="1"/>
</dbReference>
<dbReference type="HAMAP" id="MF_01417">
    <property type="entry name" value="SpeA"/>
    <property type="match status" value="1"/>
</dbReference>
<dbReference type="InterPro" id="IPR009006">
    <property type="entry name" value="Ala_racemase/Decarboxylase_C"/>
</dbReference>
<dbReference type="InterPro" id="IPR040634">
    <property type="entry name" value="Arg_decarb_HB"/>
</dbReference>
<dbReference type="InterPro" id="IPR041128">
    <property type="entry name" value="Arg_decarbox_C"/>
</dbReference>
<dbReference type="InterPro" id="IPR002985">
    <property type="entry name" value="Arg_decrbxlase"/>
</dbReference>
<dbReference type="InterPro" id="IPR022657">
    <property type="entry name" value="De-COase2_CS"/>
</dbReference>
<dbReference type="InterPro" id="IPR022644">
    <property type="entry name" value="De-COase2_N"/>
</dbReference>
<dbReference type="InterPro" id="IPR022653">
    <property type="entry name" value="De-COase2_pyr-phos_BS"/>
</dbReference>
<dbReference type="InterPro" id="IPR000183">
    <property type="entry name" value="Orn/DAP/Arg_de-COase"/>
</dbReference>
<dbReference type="InterPro" id="IPR029066">
    <property type="entry name" value="PLP-binding_barrel"/>
</dbReference>
<dbReference type="NCBIfam" id="NF003763">
    <property type="entry name" value="PRK05354.1"/>
    <property type="match status" value="1"/>
</dbReference>
<dbReference type="NCBIfam" id="TIGR01273">
    <property type="entry name" value="speA"/>
    <property type="match status" value="1"/>
</dbReference>
<dbReference type="PANTHER" id="PTHR43295">
    <property type="entry name" value="ARGININE DECARBOXYLASE"/>
    <property type="match status" value="1"/>
</dbReference>
<dbReference type="PANTHER" id="PTHR43295:SF9">
    <property type="entry name" value="BIOSYNTHETIC ARGININE DECARBOXYLASE"/>
    <property type="match status" value="1"/>
</dbReference>
<dbReference type="Pfam" id="PF17810">
    <property type="entry name" value="Arg_decarb_HB"/>
    <property type="match status" value="1"/>
</dbReference>
<dbReference type="Pfam" id="PF17944">
    <property type="entry name" value="Arg_decarbox_C"/>
    <property type="match status" value="1"/>
</dbReference>
<dbReference type="Pfam" id="PF02784">
    <property type="entry name" value="Orn_Arg_deC_N"/>
    <property type="match status" value="1"/>
</dbReference>
<dbReference type="PIRSF" id="PIRSF001336">
    <property type="entry name" value="Arg_decrbxlase"/>
    <property type="match status" value="1"/>
</dbReference>
<dbReference type="PRINTS" id="PR01180">
    <property type="entry name" value="ARGDCRBXLASE"/>
</dbReference>
<dbReference type="PRINTS" id="PR01179">
    <property type="entry name" value="ODADCRBXLASE"/>
</dbReference>
<dbReference type="SUPFAM" id="SSF50621">
    <property type="entry name" value="Alanine racemase C-terminal domain-like"/>
    <property type="match status" value="1"/>
</dbReference>
<dbReference type="SUPFAM" id="SSF51419">
    <property type="entry name" value="PLP-binding barrel"/>
    <property type="match status" value="1"/>
</dbReference>
<dbReference type="PROSITE" id="PS00878">
    <property type="entry name" value="ODR_DC_2_1"/>
    <property type="match status" value="1"/>
</dbReference>
<dbReference type="PROSITE" id="PS00879">
    <property type="entry name" value="ODR_DC_2_2"/>
    <property type="match status" value="1"/>
</dbReference>
<accession>P21170</accession>
<accession>Q2M9Q5</accession>
<reference key="1">
    <citation type="journal article" date="1990" name="J. Bacteriol.">
        <title>Nucleotide sequence and analysis of the speA gene encoding biosynthetic arginine decarboxylase in Escherichia coli.</title>
        <authorList>
            <person name="Moore R.C."/>
            <person name="Boyle S.M."/>
        </authorList>
    </citation>
    <scope>NUCLEOTIDE SEQUENCE [GENOMIC DNA]</scope>
    <scope>SUBCELLULAR LOCATION</scope>
    <scope>PROTEOLYTIC PROCESSING</scope>
    <scope>FUNCTION</scope>
    <scope>CATALYTIC ACTIVITY</scope>
    <source>
        <strain>K12</strain>
    </source>
</reference>
<reference key="2">
    <citation type="journal article" date="1997" name="Science">
        <title>The complete genome sequence of Escherichia coli K-12.</title>
        <authorList>
            <person name="Blattner F.R."/>
            <person name="Plunkett G. III"/>
            <person name="Bloch C.A."/>
            <person name="Perna N.T."/>
            <person name="Burland V."/>
            <person name="Riley M."/>
            <person name="Collado-Vides J."/>
            <person name="Glasner J.D."/>
            <person name="Rode C.K."/>
            <person name="Mayhew G.F."/>
            <person name="Gregor J."/>
            <person name="Davis N.W."/>
            <person name="Kirkpatrick H.A."/>
            <person name="Goeden M.A."/>
            <person name="Rose D.J."/>
            <person name="Mau B."/>
            <person name="Shao Y."/>
        </authorList>
    </citation>
    <scope>NUCLEOTIDE SEQUENCE [LARGE SCALE GENOMIC DNA]</scope>
    <source>
        <strain>K12 / MG1655 / ATCC 47076</strain>
    </source>
</reference>
<reference key="3">
    <citation type="journal article" date="2006" name="Mol. Syst. Biol.">
        <title>Highly accurate genome sequences of Escherichia coli K-12 strains MG1655 and W3110.</title>
        <authorList>
            <person name="Hayashi K."/>
            <person name="Morooka N."/>
            <person name="Yamamoto Y."/>
            <person name="Fujita K."/>
            <person name="Isono K."/>
            <person name="Choi S."/>
            <person name="Ohtsubo E."/>
            <person name="Baba T."/>
            <person name="Wanner B.L."/>
            <person name="Mori H."/>
            <person name="Horiuchi T."/>
        </authorList>
    </citation>
    <scope>NUCLEOTIDE SEQUENCE [LARGE SCALE GENOMIC DNA]</scope>
    <source>
        <strain>K12 / W3110 / ATCC 27325 / DSM 5911</strain>
    </source>
</reference>
<reference key="4">
    <citation type="journal article" date="1992" name="J. Bacteriol.">
        <title>Influence of cyclic AMP, agmatine, and a novel protein encoded by a flanking gene on speB (agmatine ureohydrolase) in Escherichia coli.</title>
        <authorList>
            <person name="Szumanski M.B.W."/>
            <person name="Boyle S.M."/>
        </authorList>
    </citation>
    <scope>NUCLEOTIDE SEQUENCE [GENOMIC DNA] OF 635-658</scope>
    <source>
        <strain>K12</strain>
    </source>
</reference>
<reference key="5">
    <citation type="journal article" date="1973" name="J. Biol. Chem.">
        <title>Biosynthetic arginine decarboxylase from Escherichia coli. Purification and properties.</title>
        <authorList>
            <person name="Wu W.H."/>
            <person name="Morris D.R."/>
        </authorList>
    </citation>
    <scope>FUNCTION</scope>
    <scope>CATALYTIC ACTIVITY</scope>
    <scope>BIOPHYSICOCHEMICAL PROPERTIES</scope>
    <scope>COFACTOR</scope>
    <scope>ACTIVITY REGULATION</scope>
    <scope>PATHWAY</scope>
    <scope>SUBUNIT</scope>
    <source>
        <strain>UW 44 / ATCC 27549</strain>
    </source>
</reference>
<reference key="6">
    <citation type="journal article" date="2010" name="Mol. Biol. Rep.">
        <title>Expression and purification of recombinant arginine decarboxylase (speA) from Escherichia coli.</title>
        <authorList>
            <person name="Song J."/>
            <person name="Zhou C."/>
            <person name="Liu R."/>
            <person name="Wu X."/>
            <person name="Wu D."/>
            <person name="Hu X."/>
            <person name="Ding Y."/>
        </authorList>
    </citation>
    <scope>FUNCTION</scope>
    <scope>CATALYTIC ACTIVITY</scope>
    <scope>BIOPHYSICOCHEMICAL PROPERTIES</scope>
</reference>
<sequence>MSDDMSMGLPSSAGEHGVLRSMQEVAMSSQEASKMLRTYNIAWWGNNYYDVNELGHISVCPDPDVPEARVDLAQLVKTREAQGQRLPALFCFPQILQHRLRSINAAFKRARESYGYNGDYFLVYPIKVNQHRRVIESLIHSGEPLGLEAGSKAELMAVLAHAGMTRSVIVCNGYKDREYIRLALIGEKMGHKVYLVIEKMSEIAIVLDEAERLNVVPRLGVRARLASQGSGKWQSSGGEKSKFGLAATQVLQLVETLREAGRLDSLQLLHFHLGSQMANIRDIATGVRESARFYVELHKLGVNIQCFDVGGGLGVDYEGTRSQSDCSVNYGLNEYANNIIWAIGDACEENGLPHPTVITESGRAVTAHHTVLVSNIIGVERNEYTVPTAPAEDAPRALQSMWETWQEMHEPGTRRSLREWLHDSQMDLHDIHIGYSSGIFSLQERAWAEQLYLSMCHEVQKQLDPQNRAHRPIIDELQERMADKMYVNFSLFQSMPDAWGIDQLFPVLPLEGLDQVPERRAVLLDITCDSDGAIDHYIDGDGIATTMPMPEYDPENPPMLGFFMVGAYQEILGNMHNLFGDTEAVDVFVFPDGSVEVELSDEGDTVADMLQYVQLDPKTLLTQFRDQVKKTDLDAELQQQFLEEFEAGLYGYTYLEDE</sequence>
<keyword id="KW-0002">3D-structure</keyword>
<keyword id="KW-0210">Decarboxylase</keyword>
<keyword id="KW-0456">Lyase</keyword>
<keyword id="KW-0460">Magnesium</keyword>
<keyword id="KW-0479">Metal-binding</keyword>
<keyword id="KW-0574">Periplasm</keyword>
<keyword id="KW-0620">Polyamine biosynthesis</keyword>
<keyword id="KW-0661">Putrescine biosynthesis</keyword>
<keyword id="KW-0663">Pyridoxal phosphate</keyword>
<keyword id="KW-1185">Reference proteome</keyword>
<keyword id="KW-0745">Spermidine biosynthesis</keyword>
<organism>
    <name type="scientific">Escherichia coli (strain K12)</name>
    <dbReference type="NCBI Taxonomy" id="83333"/>
    <lineage>
        <taxon>Bacteria</taxon>
        <taxon>Pseudomonadati</taxon>
        <taxon>Pseudomonadota</taxon>
        <taxon>Gammaproteobacteria</taxon>
        <taxon>Enterobacterales</taxon>
        <taxon>Enterobacteriaceae</taxon>
        <taxon>Escherichia</taxon>
    </lineage>
</organism>
<feature type="chain" id="PRO_0000149960" description="Biosynthetic arginine decarboxylase">
    <location>
        <begin position="1"/>
        <end position="658"/>
    </location>
</feature>
<feature type="binding site" evidence="2">
    <location>
        <begin position="307"/>
        <end position="317"/>
    </location>
    <ligand>
        <name>substrate</name>
    </ligand>
</feature>
<feature type="modified residue" description="N6-(pyridoxal phosphate)lysine" evidence="1">
    <location>
        <position position="127"/>
    </location>
</feature>
<feature type="sequence conflict" description="In Ref. 1; AAA24646." evidence="6" ref="1">
    <original>A</original>
    <variation>R</variation>
    <location>
        <position position="226"/>
    </location>
</feature>
<feature type="turn" evidence="7">
    <location>
        <begin position="35"/>
        <end position="40"/>
    </location>
</feature>
<feature type="helix" evidence="7">
    <location>
        <begin position="41"/>
        <end position="44"/>
    </location>
</feature>
<feature type="turn" evidence="7">
    <location>
        <begin position="45"/>
        <end position="48"/>
    </location>
</feature>
<feature type="strand" evidence="7">
    <location>
        <begin position="49"/>
        <end position="51"/>
    </location>
</feature>
<feature type="strand" evidence="7">
    <location>
        <begin position="55"/>
        <end position="59"/>
    </location>
</feature>
<feature type="helix" evidence="7">
    <location>
        <begin position="72"/>
        <end position="81"/>
    </location>
</feature>
<feature type="strand" evidence="7">
    <location>
        <begin position="86"/>
        <end position="91"/>
    </location>
</feature>
<feature type="helix" evidence="7">
    <location>
        <begin position="93"/>
        <end position="114"/>
    </location>
</feature>
<feature type="strand" evidence="7">
    <location>
        <begin position="120"/>
        <end position="125"/>
    </location>
</feature>
<feature type="helix" evidence="7">
    <location>
        <begin position="126"/>
        <end position="128"/>
    </location>
</feature>
<feature type="helix" evidence="7">
    <location>
        <begin position="132"/>
        <end position="139"/>
    </location>
</feature>
<feature type="strand" evidence="7">
    <location>
        <begin position="141"/>
        <end position="143"/>
    </location>
</feature>
<feature type="strand" evidence="7">
    <location>
        <begin position="145"/>
        <end position="151"/>
    </location>
</feature>
<feature type="helix" evidence="7">
    <location>
        <begin position="152"/>
        <end position="162"/>
    </location>
</feature>
<feature type="strand" evidence="7">
    <location>
        <begin position="168"/>
        <end position="171"/>
    </location>
</feature>
<feature type="helix" evidence="7">
    <location>
        <begin position="177"/>
        <end position="188"/>
    </location>
</feature>
<feature type="strand" evidence="7">
    <location>
        <begin position="192"/>
        <end position="197"/>
    </location>
</feature>
<feature type="helix" evidence="7">
    <location>
        <begin position="200"/>
        <end position="212"/>
    </location>
</feature>
<feature type="strand" evidence="7">
    <location>
        <begin position="219"/>
        <end position="223"/>
    </location>
</feature>
<feature type="strand" evidence="7">
    <location>
        <begin position="226"/>
        <end position="228"/>
    </location>
</feature>
<feature type="strand" evidence="7">
    <location>
        <begin position="235"/>
        <end position="239"/>
    </location>
</feature>
<feature type="helix" evidence="7">
    <location>
        <begin position="247"/>
        <end position="259"/>
    </location>
</feature>
<feature type="turn" evidence="7">
    <location>
        <begin position="263"/>
        <end position="265"/>
    </location>
</feature>
<feature type="strand" evidence="7">
    <location>
        <begin position="266"/>
        <end position="270"/>
    </location>
</feature>
<feature type="helix" evidence="7">
    <location>
        <begin position="280"/>
        <end position="298"/>
    </location>
</feature>
<feature type="turn" evidence="7">
    <location>
        <begin position="299"/>
        <end position="301"/>
    </location>
</feature>
<feature type="strand" evidence="7">
    <location>
        <begin position="306"/>
        <end position="308"/>
    </location>
</feature>
<feature type="strand" evidence="7">
    <location>
        <begin position="317"/>
        <end position="320"/>
    </location>
</feature>
<feature type="strand" evidence="7">
    <location>
        <begin position="322"/>
        <end position="324"/>
    </location>
</feature>
<feature type="helix" evidence="7">
    <location>
        <begin position="332"/>
        <end position="350"/>
    </location>
</feature>
<feature type="strand" evidence="7">
    <location>
        <begin position="356"/>
        <end position="359"/>
    </location>
</feature>
<feature type="helix" evidence="7">
    <location>
        <begin position="362"/>
        <end position="366"/>
    </location>
</feature>
<feature type="strand" evidence="7">
    <location>
        <begin position="369"/>
        <end position="380"/>
    </location>
</feature>
<feature type="helix" evidence="7">
    <location>
        <begin position="396"/>
        <end position="408"/>
    </location>
</feature>
<feature type="strand" evidence="7">
    <location>
        <begin position="409"/>
        <end position="412"/>
    </location>
</feature>
<feature type="helix" evidence="7">
    <location>
        <begin position="417"/>
        <end position="436"/>
    </location>
</feature>
<feature type="helix" evidence="7">
    <location>
        <begin position="442"/>
        <end position="462"/>
    </location>
</feature>
<feature type="helix" evidence="7">
    <location>
        <begin position="468"/>
        <end position="470"/>
    </location>
</feature>
<feature type="helix" evidence="7">
    <location>
        <begin position="471"/>
        <end position="479"/>
    </location>
</feature>
<feature type="strand" evidence="7">
    <location>
        <begin position="483"/>
        <end position="489"/>
    </location>
</feature>
<feature type="helix" evidence="7">
    <location>
        <begin position="491"/>
        <end position="494"/>
    </location>
</feature>
<feature type="helix" evidence="7">
    <location>
        <begin position="497"/>
        <end position="500"/>
    </location>
</feature>
<feature type="strand" evidence="7">
    <location>
        <begin position="507"/>
        <end position="511"/>
    </location>
</feature>
<feature type="strand" evidence="7">
    <location>
        <begin position="519"/>
        <end position="526"/>
    </location>
</feature>
<feature type="strand" evidence="7">
    <location>
        <begin position="537"/>
        <end position="539"/>
    </location>
</feature>
<feature type="strand" evidence="7">
    <location>
        <begin position="542"/>
        <end position="549"/>
    </location>
</feature>
<feature type="strand" evidence="7">
    <location>
        <begin position="559"/>
        <end position="562"/>
    </location>
</feature>
<feature type="helix" evidence="7">
    <location>
        <begin position="570"/>
        <end position="572"/>
    </location>
</feature>
<feature type="strand" evidence="7">
    <location>
        <begin position="583"/>
        <end position="589"/>
    </location>
</feature>
<feature type="strand" evidence="7">
    <location>
        <begin position="595"/>
        <end position="601"/>
    </location>
</feature>
<feature type="helix" evidence="7">
    <location>
        <begin position="606"/>
        <end position="612"/>
    </location>
</feature>
<feature type="helix" evidence="7">
    <location>
        <begin position="617"/>
        <end position="627"/>
    </location>
</feature>
<feature type="helix" evidence="7">
    <location>
        <begin position="629"/>
        <end position="631"/>
    </location>
</feature>
<feature type="helix" evidence="7">
    <location>
        <begin position="635"/>
        <end position="649"/>
    </location>
</feature>
<feature type="strand" evidence="7">
    <location>
        <begin position="650"/>
        <end position="654"/>
    </location>
</feature>
<protein>
    <recommendedName>
        <fullName>Biosynthetic arginine decarboxylase</fullName>
        <shortName>ADC</shortName>
        <ecNumber evidence="3 4 5">4.1.1.19</ecNumber>
    </recommendedName>
</protein>
<gene>
    <name type="primary">speA</name>
    <name type="ordered locus">b2938</name>
    <name type="ordered locus">JW2905</name>
</gene>
<comment type="function">
    <text evidence="3 4 5">Catalyzes the biosynthesis of agmatine from arginine.</text>
</comment>
<comment type="catalytic activity">
    <reaction evidence="3 4 5">
        <text>L-arginine + H(+) = agmatine + CO2</text>
        <dbReference type="Rhea" id="RHEA:17641"/>
        <dbReference type="ChEBI" id="CHEBI:15378"/>
        <dbReference type="ChEBI" id="CHEBI:16526"/>
        <dbReference type="ChEBI" id="CHEBI:32682"/>
        <dbReference type="ChEBI" id="CHEBI:58145"/>
        <dbReference type="EC" id="4.1.1.19"/>
    </reaction>
    <physiologicalReaction direction="left-to-right" evidence="3 4 5">
        <dbReference type="Rhea" id="RHEA:17642"/>
    </physiologicalReaction>
</comment>
<comment type="cofactor">
    <cofactor>
        <name>pyridoxal 5'-phosphate</name>
        <dbReference type="ChEBI" id="CHEBI:597326"/>
    </cofactor>
</comment>
<comment type="cofactor">
    <cofactor evidence="5">
        <name>Mg(2+)</name>
        <dbReference type="ChEBI" id="CHEBI:18420"/>
    </cofactor>
</comment>
<comment type="activity regulation">
    <text evidence="5">Down-regulated by polyamine end products putrescine and spermidine.</text>
</comment>
<comment type="biophysicochemical properties">
    <kinetics>
        <KM evidence="5">0.03 mM for L-arginine</KM>
    </kinetics>
    <phDependence>
        <text evidence="5">Optimum pH is 8.4.</text>
    </phDependence>
    <temperatureDependence>
        <text evidence="3">Optimum temperature is 50 degrees Celsius. Thermostable. Active from 20 to 80 degrees Celsius.</text>
    </temperatureDependence>
</comment>
<comment type="pathway">
    <text evidence="5">Amine and polyamine biosynthesis; agmatine biosynthesis; agmatine from L-arginine: step 1/1.</text>
</comment>
<comment type="subunit">
    <text evidence="5">Homotetramer.</text>
</comment>
<comment type="subcellular location">
    <subcellularLocation>
        <location evidence="4">Periplasm</location>
    </subcellularLocation>
</comment>
<comment type="induction">
    <text>By growth in an acidic enriched medium containing arginine (biodegradative form), by growth in minimal media at neutral pH (biosynthetic). Putrescine and spermidine repress the speA gene and feedback inhibit ADC.</text>
</comment>
<comment type="PTM">
    <text>Processed post-translationally to a 70 kDa mature form.</text>
</comment>
<comment type="PTM">
    <text>The N-terminus is blocked.</text>
</comment>
<comment type="miscellaneous">
    <text>ADC can be found in two forms: biodegradative and biosynthetic. The biodegradative form may play a role in regulating pH by consuming proteins.</text>
</comment>
<comment type="similarity">
    <text evidence="6">Belongs to the Orn/Lys/Arg decarboxylase class-II family. SpeA subfamily.</text>
</comment>
<evidence type="ECO:0000250" key="1"/>
<evidence type="ECO:0000255" key="2"/>
<evidence type="ECO:0000269" key="3">
    <source>
    </source>
</evidence>
<evidence type="ECO:0000269" key="4">
    <source>
    </source>
</evidence>
<evidence type="ECO:0000269" key="5">
    <source>
    </source>
</evidence>
<evidence type="ECO:0000305" key="6"/>
<evidence type="ECO:0007829" key="7">
    <source>
        <dbReference type="PDB" id="3NZQ"/>
    </source>
</evidence>